<dbReference type="EC" id="2.1.1.191" evidence="1"/>
<dbReference type="EMBL" id="CU468135">
    <property type="protein sequence ID" value="CAO97139.1"/>
    <property type="molecule type" value="Genomic_DNA"/>
</dbReference>
<dbReference type="RefSeq" id="WP_012441810.1">
    <property type="nucleotide sequence ID" value="NC_010694.1"/>
</dbReference>
<dbReference type="SMR" id="B2VDG5"/>
<dbReference type="STRING" id="465817.ETA_20930"/>
<dbReference type="KEGG" id="eta:ETA_20930"/>
<dbReference type="eggNOG" id="COG1092">
    <property type="taxonomic scope" value="Bacteria"/>
</dbReference>
<dbReference type="HOGENOM" id="CLU_014042_0_0_6"/>
<dbReference type="OrthoDB" id="9805492at2"/>
<dbReference type="Proteomes" id="UP000001726">
    <property type="component" value="Chromosome"/>
</dbReference>
<dbReference type="GO" id="GO:0005737">
    <property type="term" value="C:cytoplasm"/>
    <property type="evidence" value="ECO:0007669"/>
    <property type="project" value="UniProtKB-SubCell"/>
</dbReference>
<dbReference type="GO" id="GO:0003723">
    <property type="term" value="F:RNA binding"/>
    <property type="evidence" value="ECO:0007669"/>
    <property type="project" value="UniProtKB-KW"/>
</dbReference>
<dbReference type="GO" id="GO:0016434">
    <property type="term" value="F:rRNA (cytosine) methyltransferase activity"/>
    <property type="evidence" value="ECO:0007669"/>
    <property type="project" value="UniProtKB-UniRule"/>
</dbReference>
<dbReference type="CDD" id="cd02440">
    <property type="entry name" value="AdoMet_MTases"/>
    <property type="match status" value="1"/>
</dbReference>
<dbReference type="CDD" id="cd21153">
    <property type="entry name" value="PUA_RlmI"/>
    <property type="match status" value="1"/>
</dbReference>
<dbReference type="CDD" id="cd11572">
    <property type="entry name" value="RlmI_M_like"/>
    <property type="match status" value="1"/>
</dbReference>
<dbReference type="Gene3D" id="2.30.130.10">
    <property type="entry name" value="PUA domain"/>
    <property type="match status" value="1"/>
</dbReference>
<dbReference type="Gene3D" id="3.30.750.80">
    <property type="entry name" value="RNA methyltransferase domain (HRMD) like"/>
    <property type="match status" value="1"/>
</dbReference>
<dbReference type="Gene3D" id="3.40.50.150">
    <property type="entry name" value="Vaccinia Virus protein VP39"/>
    <property type="match status" value="1"/>
</dbReference>
<dbReference type="HAMAP" id="MF_01857">
    <property type="entry name" value="23SrRNA_methyltr_I"/>
    <property type="match status" value="1"/>
</dbReference>
<dbReference type="InterPro" id="IPR002478">
    <property type="entry name" value="PUA"/>
</dbReference>
<dbReference type="InterPro" id="IPR015947">
    <property type="entry name" value="PUA-like_sf"/>
</dbReference>
<dbReference type="InterPro" id="IPR036974">
    <property type="entry name" value="PUA_sf"/>
</dbReference>
<dbReference type="InterPro" id="IPR023542">
    <property type="entry name" value="RLMI"/>
</dbReference>
<dbReference type="InterPro" id="IPR041532">
    <property type="entry name" value="RlmI-like_PUA"/>
</dbReference>
<dbReference type="InterPro" id="IPR019614">
    <property type="entry name" value="SAM-dep_methyl-trfase"/>
</dbReference>
<dbReference type="InterPro" id="IPR029063">
    <property type="entry name" value="SAM-dependent_MTases_sf"/>
</dbReference>
<dbReference type="NCBIfam" id="NF011707">
    <property type="entry name" value="PRK15128.1"/>
    <property type="match status" value="1"/>
</dbReference>
<dbReference type="PANTHER" id="PTHR42873">
    <property type="entry name" value="RIBOSOMAL RNA LARGE SUBUNIT METHYLTRANSFERASE"/>
    <property type="match status" value="1"/>
</dbReference>
<dbReference type="PANTHER" id="PTHR42873:SF1">
    <property type="entry name" value="S-ADENOSYLMETHIONINE-DEPENDENT METHYLTRANSFERASE DOMAIN-CONTAINING PROTEIN"/>
    <property type="match status" value="1"/>
</dbReference>
<dbReference type="Pfam" id="PF10672">
    <property type="entry name" value="Methyltrans_SAM"/>
    <property type="match status" value="1"/>
</dbReference>
<dbReference type="Pfam" id="PF17785">
    <property type="entry name" value="PUA_3"/>
    <property type="match status" value="1"/>
</dbReference>
<dbReference type="SMART" id="SM00359">
    <property type="entry name" value="PUA"/>
    <property type="match status" value="1"/>
</dbReference>
<dbReference type="SUPFAM" id="SSF88697">
    <property type="entry name" value="PUA domain-like"/>
    <property type="match status" value="1"/>
</dbReference>
<dbReference type="SUPFAM" id="SSF53335">
    <property type="entry name" value="S-adenosyl-L-methionine-dependent methyltransferases"/>
    <property type="match status" value="1"/>
</dbReference>
<dbReference type="PROSITE" id="PS50890">
    <property type="entry name" value="PUA"/>
    <property type="match status" value="1"/>
</dbReference>
<sequence>MTVRLILAKGREKSLLRRHPWVFSGAVARLEGKAQPGETIDVCDSQGKWLARAAWSPSSQIRARVWSWQQDESIDIDFFVRRLNAAQQLRDWLALRDNLDSYRLIAGESDGLPGITIDRFGNFLVLQLLSAGAEYQRAALITALQRCYPDCAIYDRSDVSVRKKEGLELTQGVVLGDAPPPLLPITEHGMKLLVDIQTGHKTGYYLDQRDSRQATRRYAQGRRVLNCFSYTGGFAVSALMGNCKEVISVDTSQAALDVARQNVELNGLDVSKAHFQRDDVFKLLRRYRDEGEKFDLIIMDPPKFVENKNQLMGACRGYKDINMLAMQLLNPGGMLMTFSCSGLMATDLFQKILADAAVDAQREVQFIEQFRQAADHPVISSYPEGMYLKGFACRVI</sequence>
<evidence type="ECO:0000255" key="1">
    <source>
        <dbReference type="HAMAP-Rule" id="MF_01857"/>
    </source>
</evidence>
<reference key="1">
    <citation type="journal article" date="2008" name="Environ. Microbiol.">
        <title>The genome of Erwinia tasmaniensis strain Et1/99, a non-pathogenic bacterium in the genus Erwinia.</title>
        <authorList>
            <person name="Kube M."/>
            <person name="Migdoll A.M."/>
            <person name="Mueller I."/>
            <person name="Kuhl H."/>
            <person name="Beck A."/>
            <person name="Reinhardt R."/>
            <person name="Geider K."/>
        </authorList>
    </citation>
    <scope>NUCLEOTIDE SEQUENCE [LARGE SCALE GENOMIC DNA]</scope>
    <source>
        <strain>DSM 17950 / CFBP 7177 / CIP 109463 / NCPPB 4357 / Et1/99</strain>
    </source>
</reference>
<proteinExistence type="inferred from homology"/>
<organism>
    <name type="scientific">Erwinia tasmaniensis (strain DSM 17950 / CFBP 7177 / CIP 109463 / NCPPB 4357 / Et1/99)</name>
    <dbReference type="NCBI Taxonomy" id="465817"/>
    <lineage>
        <taxon>Bacteria</taxon>
        <taxon>Pseudomonadati</taxon>
        <taxon>Pseudomonadota</taxon>
        <taxon>Gammaproteobacteria</taxon>
        <taxon>Enterobacterales</taxon>
        <taxon>Erwiniaceae</taxon>
        <taxon>Erwinia</taxon>
    </lineage>
</organism>
<name>RLMI_ERWT9</name>
<protein>
    <recommendedName>
        <fullName evidence="1">Ribosomal RNA large subunit methyltransferase I</fullName>
        <ecNumber evidence="1">2.1.1.191</ecNumber>
    </recommendedName>
    <alternativeName>
        <fullName evidence="1">23S rRNA m5C1962 methyltransferase</fullName>
    </alternativeName>
    <alternativeName>
        <fullName evidence="1">rRNA (cytosine-C(5)-)-methyltransferase RlmI</fullName>
    </alternativeName>
</protein>
<keyword id="KW-0963">Cytoplasm</keyword>
<keyword id="KW-0489">Methyltransferase</keyword>
<keyword id="KW-1185">Reference proteome</keyword>
<keyword id="KW-0694">RNA-binding</keyword>
<keyword id="KW-0698">rRNA processing</keyword>
<keyword id="KW-0949">S-adenosyl-L-methionine</keyword>
<keyword id="KW-0808">Transferase</keyword>
<feature type="chain" id="PRO_0000366222" description="Ribosomal RNA large subunit methyltransferase I">
    <location>
        <begin position="1"/>
        <end position="396"/>
    </location>
</feature>
<feature type="domain" description="PUA" evidence="1">
    <location>
        <begin position="2"/>
        <end position="81"/>
    </location>
</feature>
<accession>B2VDG5</accession>
<comment type="function">
    <text evidence="1">Specifically methylates the cytosine at position 1962 (m5C1962) of 23S rRNA.</text>
</comment>
<comment type="catalytic activity">
    <reaction evidence="1">
        <text>cytidine(1962) in 23S rRNA + S-adenosyl-L-methionine = 5-methylcytidine(1962) in 23S rRNA + S-adenosyl-L-homocysteine + H(+)</text>
        <dbReference type="Rhea" id="RHEA:42912"/>
        <dbReference type="Rhea" id="RHEA-COMP:10382"/>
        <dbReference type="Rhea" id="RHEA-COMP:10386"/>
        <dbReference type="ChEBI" id="CHEBI:15378"/>
        <dbReference type="ChEBI" id="CHEBI:57856"/>
        <dbReference type="ChEBI" id="CHEBI:59789"/>
        <dbReference type="ChEBI" id="CHEBI:74483"/>
        <dbReference type="ChEBI" id="CHEBI:82748"/>
        <dbReference type="EC" id="2.1.1.191"/>
    </reaction>
</comment>
<comment type="subcellular location">
    <subcellularLocation>
        <location evidence="1">Cytoplasm</location>
    </subcellularLocation>
</comment>
<comment type="similarity">
    <text evidence="1">Belongs to the methyltransferase superfamily. RlmI family.</text>
</comment>
<gene>
    <name evidence="1" type="primary">rlmI</name>
    <name type="ordered locus">ETA_20930</name>
</gene>